<feature type="chain" id="PRO_1000005777" description="DNA-directed RNA polymerase subunit Rpo10">
    <location>
        <begin position="1"/>
        <end position="68"/>
    </location>
</feature>
<feature type="binding site" evidence="1">
    <location>
        <position position="7"/>
    </location>
    <ligand>
        <name>Zn(2+)</name>
        <dbReference type="ChEBI" id="CHEBI:29105"/>
    </ligand>
</feature>
<feature type="binding site" evidence="1">
    <location>
        <position position="10"/>
    </location>
    <ligand>
        <name>Zn(2+)</name>
        <dbReference type="ChEBI" id="CHEBI:29105"/>
    </ligand>
</feature>
<feature type="binding site" evidence="1">
    <location>
        <position position="44"/>
    </location>
    <ligand>
        <name>Zn(2+)</name>
        <dbReference type="ChEBI" id="CHEBI:29105"/>
    </ligand>
</feature>
<feature type="binding site" evidence="1">
    <location>
        <position position="45"/>
    </location>
    <ligand>
        <name>Zn(2+)</name>
        <dbReference type="ChEBI" id="CHEBI:29105"/>
    </ligand>
</feature>
<proteinExistence type="inferred from homology"/>
<comment type="function">
    <text evidence="1">DNA-dependent RNA polymerase (RNAP) catalyzes the transcription of DNA into RNA using the four ribonucleoside triphosphates as substrates.</text>
</comment>
<comment type="catalytic activity">
    <reaction evidence="1">
        <text>RNA(n) + a ribonucleoside 5'-triphosphate = RNA(n+1) + diphosphate</text>
        <dbReference type="Rhea" id="RHEA:21248"/>
        <dbReference type="Rhea" id="RHEA-COMP:14527"/>
        <dbReference type="Rhea" id="RHEA-COMP:17342"/>
        <dbReference type="ChEBI" id="CHEBI:33019"/>
        <dbReference type="ChEBI" id="CHEBI:61557"/>
        <dbReference type="ChEBI" id="CHEBI:140395"/>
        <dbReference type="EC" id="2.7.7.6"/>
    </reaction>
</comment>
<comment type="cofactor">
    <cofactor evidence="1">
        <name>Zn(2+)</name>
        <dbReference type="ChEBI" id="CHEBI:29105"/>
    </cofactor>
    <text evidence="1">Binds 1 zinc ion.</text>
</comment>
<comment type="subunit">
    <text evidence="1">Part of the RNA polymerase complex.</text>
</comment>
<comment type="subcellular location">
    <subcellularLocation>
        <location evidence="1">Cytoplasm</location>
    </subcellularLocation>
</comment>
<comment type="similarity">
    <text evidence="1">Belongs to the archaeal Rpo10/eukaryotic RPB10 RNA polymerase subunit family.</text>
</comment>
<reference key="1">
    <citation type="submission" date="2007-03" db="EMBL/GenBank/DDBJ databases">
        <title>Complete sequence of chromosome of Methanococcus maripaludis C5.</title>
        <authorList>
            <consortium name="US DOE Joint Genome Institute"/>
            <person name="Copeland A."/>
            <person name="Lucas S."/>
            <person name="Lapidus A."/>
            <person name="Barry K."/>
            <person name="Glavina del Rio T."/>
            <person name="Dalin E."/>
            <person name="Tice H."/>
            <person name="Pitluck S."/>
            <person name="Chertkov O."/>
            <person name="Brettin T."/>
            <person name="Bruce D."/>
            <person name="Han C."/>
            <person name="Detter J.C."/>
            <person name="Schmutz J."/>
            <person name="Larimer F."/>
            <person name="Land M."/>
            <person name="Hauser L."/>
            <person name="Kyrpides N."/>
            <person name="Mikhailova N."/>
            <person name="Sieprawska-Lupa M."/>
            <person name="Whitman W.B."/>
            <person name="Richardson P."/>
        </authorList>
    </citation>
    <scope>NUCLEOTIDE SEQUENCE [LARGE SCALE GENOMIC DNA]</scope>
    <source>
        <strain>C5 / ATCC BAA-1333</strain>
    </source>
</reference>
<evidence type="ECO:0000255" key="1">
    <source>
        <dbReference type="HAMAP-Rule" id="MF_00250"/>
    </source>
</evidence>
<dbReference type="EC" id="2.7.7.6" evidence="1"/>
<dbReference type="EMBL" id="CP000609">
    <property type="protein sequence ID" value="ABO34583.1"/>
    <property type="molecule type" value="Genomic_DNA"/>
</dbReference>
<dbReference type="RefSeq" id="WP_011868039.1">
    <property type="nucleotide sequence ID" value="NC_009135.1"/>
</dbReference>
<dbReference type="SMR" id="A4FWK8"/>
<dbReference type="STRING" id="402880.MmarC5_0267"/>
<dbReference type="GeneID" id="4928272"/>
<dbReference type="KEGG" id="mmq:MmarC5_0267"/>
<dbReference type="eggNOG" id="arCOG04244">
    <property type="taxonomic scope" value="Archaea"/>
</dbReference>
<dbReference type="HOGENOM" id="CLU_143122_2_1_2"/>
<dbReference type="OrthoDB" id="371754at2157"/>
<dbReference type="Proteomes" id="UP000000253">
    <property type="component" value="Chromosome"/>
</dbReference>
<dbReference type="GO" id="GO:0005737">
    <property type="term" value="C:cytoplasm"/>
    <property type="evidence" value="ECO:0007669"/>
    <property type="project" value="UniProtKB-SubCell"/>
</dbReference>
<dbReference type="GO" id="GO:0000428">
    <property type="term" value="C:DNA-directed RNA polymerase complex"/>
    <property type="evidence" value="ECO:0007669"/>
    <property type="project" value="UniProtKB-KW"/>
</dbReference>
<dbReference type="GO" id="GO:0003677">
    <property type="term" value="F:DNA binding"/>
    <property type="evidence" value="ECO:0007669"/>
    <property type="project" value="InterPro"/>
</dbReference>
<dbReference type="GO" id="GO:0003899">
    <property type="term" value="F:DNA-directed RNA polymerase activity"/>
    <property type="evidence" value="ECO:0007669"/>
    <property type="project" value="UniProtKB-UniRule"/>
</dbReference>
<dbReference type="GO" id="GO:0008270">
    <property type="term" value="F:zinc ion binding"/>
    <property type="evidence" value="ECO:0007669"/>
    <property type="project" value="UniProtKB-UniRule"/>
</dbReference>
<dbReference type="GO" id="GO:0006351">
    <property type="term" value="P:DNA-templated transcription"/>
    <property type="evidence" value="ECO:0007669"/>
    <property type="project" value="UniProtKB-UniRule"/>
</dbReference>
<dbReference type="Gene3D" id="1.10.10.60">
    <property type="entry name" value="Homeodomain-like"/>
    <property type="match status" value="1"/>
</dbReference>
<dbReference type="HAMAP" id="MF_00250">
    <property type="entry name" value="RNApol_arch_Rpo10"/>
    <property type="match status" value="1"/>
</dbReference>
<dbReference type="InterPro" id="IPR023580">
    <property type="entry name" value="RNA_pol_su_RPB10"/>
</dbReference>
<dbReference type="InterPro" id="IPR020789">
    <property type="entry name" value="RNA_pol_suN_Zn-BS"/>
</dbReference>
<dbReference type="InterPro" id="IPR000268">
    <property type="entry name" value="RPABC5/Rpb10"/>
</dbReference>
<dbReference type="NCBIfam" id="NF003089">
    <property type="entry name" value="PRK04016.1"/>
    <property type="match status" value="1"/>
</dbReference>
<dbReference type="PANTHER" id="PTHR23431:SF3">
    <property type="entry name" value="DNA-DIRECTED RNA POLYMERASES I, II, AND III SUBUNIT RPABC5"/>
    <property type="match status" value="1"/>
</dbReference>
<dbReference type="PANTHER" id="PTHR23431">
    <property type="entry name" value="DNA-DIRECTED RNA POLYMERASES I, II, AND III SUBUNIT RPABC5 FAMILY MEMBER"/>
    <property type="match status" value="1"/>
</dbReference>
<dbReference type="Pfam" id="PF01194">
    <property type="entry name" value="RNA_pol_N"/>
    <property type="match status" value="1"/>
</dbReference>
<dbReference type="PIRSF" id="PIRSF005653">
    <property type="entry name" value="RNA_pol_N/8_sub"/>
    <property type="match status" value="1"/>
</dbReference>
<dbReference type="SUPFAM" id="SSF46924">
    <property type="entry name" value="RNA polymerase subunit RPB10"/>
    <property type="match status" value="1"/>
</dbReference>
<dbReference type="PROSITE" id="PS01112">
    <property type="entry name" value="RNA_POL_N_8KD"/>
    <property type="match status" value="1"/>
</dbReference>
<sequence>MIFPIRCFSCGAVISEVYEEYRTRLKNGENPEEILNDLEVKKYCCRRMFASHRLDNDRELFDDIVEYK</sequence>
<keyword id="KW-0963">Cytoplasm</keyword>
<keyword id="KW-0240">DNA-directed RNA polymerase</keyword>
<keyword id="KW-0479">Metal-binding</keyword>
<keyword id="KW-0548">Nucleotidyltransferase</keyword>
<keyword id="KW-0804">Transcription</keyword>
<keyword id="KW-0808">Transferase</keyword>
<keyword id="KW-0862">Zinc</keyword>
<accession>A4FWK8</accession>
<gene>
    <name evidence="1" type="primary">rpo10</name>
    <name evidence="1" type="synonym">rpoN</name>
    <name type="ordered locus">MmarC5_0267</name>
</gene>
<protein>
    <recommendedName>
        <fullName evidence="1">DNA-directed RNA polymerase subunit Rpo10</fullName>
        <ecNumber evidence="1">2.7.7.6</ecNumber>
    </recommendedName>
    <alternativeName>
        <fullName evidence="1">DNA-directed RNA polymerase subunit N</fullName>
    </alternativeName>
</protein>
<name>RPO10_METM5</name>
<organism>
    <name type="scientific">Methanococcus maripaludis (strain C5 / ATCC BAA-1333)</name>
    <dbReference type="NCBI Taxonomy" id="402880"/>
    <lineage>
        <taxon>Archaea</taxon>
        <taxon>Methanobacteriati</taxon>
        <taxon>Methanobacteriota</taxon>
        <taxon>Methanomada group</taxon>
        <taxon>Methanococci</taxon>
        <taxon>Methanococcales</taxon>
        <taxon>Methanococcaceae</taxon>
        <taxon>Methanococcus</taxon>
    </lineage>
</organism>